<evidence type="ECO:0000255" key="1">
    <source>
        <dbReference type="HAMAP-Rule" id="MF_02006"/>
    </source>
</evidence>
<sequence>MNIFEELKARGLVFQTTDEQALVKALTEGQVSYYTGYDPTADSLHLGHLVAILTSRRLQLAGHKPYALVGGATGLIGDPSFKDAERSLQTKETVLEWSDKIKGQLSTFLDFENGDNKAELVNNYDWFSQISFIDFLRDVGKYFTVNYMMSKDSVKKRIETGISYTEFAYQIMQGYDFYELNDKHNVTLQIGGSDQWGNMTAGTELLRKKADKTGHVMTVPLITDSTGKKFGKSEGNAVWLDADKTSPYEMYQFWLNVMDDDAVRFLKIFTFLSLDEIAEIETQFNAARHERLAQKTLAREVVTLVHGEEAYKQALNITEQLFAGNIKNLSANELKQGLSNVPNYHVQSEDSLNLVDMLVTAGISPSKRQAREDVQNGAIYINGDRVQDLDYQLSNDDKIDDQLTVIRRGKKKYAVLTY</sequence>
<organism>
    <name type="scientific">Streptococcus pyogenes serotype M12 (strain MGAS2096)</name>
    <dbReference type="NCBI Taxonomy" id="370553"/>
    <lineage>
        <taxon>Bacteria</taxon>
        <taxon>Bacillati</taxon>
        <taxon>Bacillota</taxon>
        <taxon>Bacilli</taxon>
        <taxon>Lactobacillales</taxon>
        <taxon>Streptococcaceae</taxon>
        <taxon>Streptococcus</taxon>
    </lineage>
</organism>
<protein>
    <recommendedName>
        <fullName evidence="1">Tyrosine--tRNA ligase</fullName>
        <ecNumber evidence="1">6.1.1.1</ecNumber>
    </recommendedName>
    <alternativeName>
        <fullName evidence="1">Tyrosyl-tRNA synthetase</fullName>
        <shortName evidence="1">TyrRS</shortName>
    </alternativeName>
</protein>
<proteinExistence type="inferred from homology"/>
<name>SYY_STRPB</name>
<feature type="chain" id="PRO_1000088634" description="Tyrosine--tRNA ligase">
    <location>
        <begin position="1"/>
        <end position="418"/>
    </location>
</feature>
<feature type="domain" description="S4 RNA-binding" evidence="1">
    <location>
        <begin position="352"/>
        <end position="418"/>
    </location>
</feature>
<feature type="short sequence motif" description="'HIGH' region">
    <location>
        <begin position="39"/>
        <end position="48"/>
    </location>
</feature>
<feature type="short sequence motif" description="'KMSKS' region">
    <location>
        <begin position="229"/>
        <end position="233"/>
    </location>
</feature>
<feature type="binding site" evidence="1">
    <location>
        <position position="34"/>
    </location>
    <ligand>
        <name>L-tyrosine</name>
        <dbReference type="ChEBI" id="CHEBI:58315"/>
    </ligand>
</feature>
<feature type="binding site" evidence="1">
    <location>
        <position position="169"/>
    </location>
    <ligand>
        <name>L-tyrosine</name>
        <dbReference type="ChEBI" id="CHEBI:58315"/>
    </ligand>
</feature>
<feature type="binding site" evidence="1">
    <location>
        <position position="173"/>
    </location>
    <ligand>
        <name>L-tyrosine</name>
        <dbReference type="ChEBI" id="CHEBI:58315"/>
    </ligand>
</feature>
<feature type="binding site" evidence="1">
    <location>
        <position position="232"/>
    </location>
    <ligand>
        <name>ATP</name>
        <dbReference type="ChEBI" id="CHEBI:30616"/>
    </ligand>
</feature>
<reference key="1">
    <citation type="journal article" date="2006" name="Proc. Natl. Acad. Sci. U.S.A.">
        <title>Molecular genetic anatomy of inter- and intraserotype variation in the human bacterial pathogen group A Streptococcus.</title>
        <authorList>
            <person name="Beres S.B."/>
            <person name="Richter E.W."/>
            <person name="Nagiec M.J."/>
            <person name="Sumby P."/>
            <person name="Porcella S.F."/>
            <person name="DeLeo F.R."/>
            <person name="Musser J.M."/>
        </authorList>
    </citation>
    <scope>NUCLEOTIDE SEQUENCE [LARGE SCALE GENOMIC DNA]</scope>
    <source>
        <strain>MGAS2096</strain>
    </source>
</reference>
<keyword id="KW-0030">Aminoacyl-tRNA synthetase</keyword>
<keyword id="KW-0067">ATP-binding</keyword>
<keyword id="KW-0963">Cytoplasm</keyword>
<keyword id="KW-0436">Ligase</keyword>
<keyword id="KW-0547">Nucleotide-binding</keyword>
<keyword id="KW-0648">Protein biosynthesis</keyword>
<keyword id="KW-0694">RNA-binding</keyword>
<accession>Q1JE22</accession>
<dbReference type="EC" id="6.1.1.1" evidence="1"/>
<dbReference type="EMBL" id="CP000261">
    <property type="protein sequence ID" value="ABF35136.1"/>
    <property type="molecule type" value="Genomic_DNA"/>
</dbReference>
<dbReference type="SMR" id="Q1JE22"/>
<dbReference type="KEGG" id="spj:MGAS2096_Spy0084"/>
<dbReference type="HOGENOM" id="CLU_024003_0_3_9"/>
<dbReference type="GO" id="GO:0005829">
    <property type="term" value="C:cytosol"/>
    <property type="evidence" value="ECO:0007669"/>
    <property type="project" value="TreeGrafter"/>
</dbReference>
<dbReference type="GO" id="GO:0005524">
    <property type="term" value="F:ATP binding"/>
    <property type="evidence" value="ECO:0007669"/>
    <property type="project" value="UniProtKB-UniRule"/>
</dbReference>
<dbReference type="GO" id="GO:0003723">
    <property type="term" value="F:RNA binding"/>
    <property type="evidence" value="ECO:0007669"/>
    <property type="project" value="UniProtKB-KW"/>
</dbReference>
<dbReference type="GO" id="GO:0004831">
    <property type="term" value="F:tyrosine-tRNA ligase activity"/>
    <property type="evidence" value="ECO:0007669"/>
    <property type="project" value="UniProtKB-UniRule"/>
</dbReference>
<dbReference type="GO" id="GO:0006437">
    <property type="term" value="P:tyrosyl-tRNA aminoacylation"/>
    <property type="evidence" value="ECO:0007669"/>
    <property type="project" value="UniProtKB-UniRule"/>
</dbReference>
<dbReference type="CDD" id="cd00165">
    <property type="entry name" value="S4"/>
    <property type="match status" value="1"/>
</dbReference>
<dbReference type="CDD" id="cd00805">
    <property type="entry name" value="TyrRS_core"/>
    <property type="match status" value="1"/>
</dbReference>
<dbReference type="FunFam" id="1.10.240.10:FF:000001">
    <property type="entry name" value="Tyrosine--tRNA ligase"/>
    <property type="match status" value="1"/>
</dbReference>
<dbReference type="FunFam" id="3.40.50.620:FF:000008">
    <property type="entry name" value="Tyrosine--tRNA ligase"/>
    <property type="match status" value="1"/>
</dbReference>
<dbReference type="Gene3D" id="3.40.50.620">
    <property type="entry name" value="HUPs"/>
    <property type="match status" value="1"/>
</dbReference>
<dbReference type="Gene3D" id="3.10.290.10">
    <property type="entry name" value="RNA-binding S4 domain"/>
    <property type="match status" value="1"/>
</dbReference>
<dbReference type="Gene3D" id="1.10.240.10">
    <property type="entry name" value="Tyrosyl-Transfer RNA Synthetase"/>
    <property type="match status" value="1"/>
</dbReference>
<dbReference type="HAMAP" id="MF_02006">
    <property type="entry name" value="Tyr_tRNA_synth_type1"/>
    <property type="match status" value="1"/>
</dbReference>
<dbReference type="InterPro" id="IPR001412">
    <property type="entry name" value="aa-tRNA-synth_I_CS"/>
</dbReference>
<dbReference type="InterPro" id="IPR002305">
    <property type="entry name" value="aa-tRNA-synth_Ic"/>
</dbReference>
<dbReference type="InterPro" id="IPR014729">
    <property type="entry name" value="Rossmann-like_a/b/a_fold"/>
</dbReference>
<dbReference type="InterPro" id="IPR002942">
    <property type="entry name" value="S4_RNA-bd"/>
</dbReference>
<dbReference type="InterPro" id="IPR036986">
    <property type="entry name" value="S4_RNA-bd_sf"/>
</dbReference>
<dbReference type="InterPro" id="IPR054608">
    <property type="entry name" value="SYY-like_C"/>
</dbReference>
<dbReference type="InterPro" id="IPR002307">
    <property type="entry name" value="Tyr-tRNA-ligase"/>
</dbReference>
<dbReference type="InterPro" id="IPR024088">
    <property type="entry name" value="Tyr-tRNA-ligase_bac-type"/>
</dbReference>
<dbReference type="InterPro" id="IPR024107">
    <property type="entry name" value="Tyr-tRNA-ligase_bac_1"/>
</dbReference>
<dbReference type="NCBIfam" id="TIGR00234">
    <property type="entry name" value="tyrS"/>
    <property type="match status" value="1"/>
</dbReference>
<dbReference type="PANTHER" id="PTHR11766:SF0">
    <property type="entry name" value="TYROSINE--TRNA LIGASE, MITOCHONDRIAL"/>
    <property type="match status" value="1"/>
</dbReference>
<dbReference type="PANTHER" id="PTHR11766">
    <property type="entry name" value="TYROSYL-TRNA SYNTHETASE"/>
    <property type="match status" value="1"/>
</dbReference>
<dbReference type="Pfam" id="PF22421">
    <property type="entry name" value="SYY_C-terminal"/>
    <property type="match status" value="1"/>
</dbReference>
<dbReference type="Pfam" id="PF00579">
    <property type="entry name" value="tRNA-synt_1b"/>
    <property type="match status" value="1"/>
</dbReference>
<dbReference type="PRINTS" id="PR01040">
    <property type="entry name" value="TRNASYNTHTYR"/>
</dbReference>
<dbReference type="SMART" id="SM00363">
    <property type="entry name" value="S4"/>
    <property type="match status" value="1"/>
</dbReference>
<dbReference type="SUPFAM" id="SSF55174">
    <property type="entry name" value="Alpha-L RNA-binding motif"/>
    <property type="match status" value="1"/>
</dbReference>
<dbReference type="SUPFAM" id="SSF52374">
    <property type="entry name" value="Nucleotidylyl transferase"/>
    <property type="match status" value="1"/>
</dbReference>
<dbReference type="PROSITE" id="PS00178">
    <property type="entry name" value="AA_TRNA_LIGASE_I"/>
    <property type="match status" value="1"/>
</dbReference>
<dbReference type="PROSITE" id="PS50889">
    <property type="entry name" value="S4"/>
    <property type="match status" value="1"/>
</dbReference>
<comment type="function">
    <text evidence="1">Catalyzes the attachment of tyrosine to tRNA(Tyr) in a two-step reaction: tyrosine is first activated by ATP to form Tyr-AMP and then transferred to the acceptor end of tRNA(Tyr).</text>
</comment>
<comment type="catalytic activity">
    <reaction evidence="1">
        <text>tRNA(Tyr) + L-tyrosine + ATP = L-tyrosyl-tRNA(Tyr) + AMP + diphosphate + H(+)</text>
        <dbReference type="Rhea" id="RHEA:10220"/>
        <dbReference type="Rhea" id="RHEA-COMP:9706"/>
        <dbReference type="Rhea" id="RHEA-COMP:9707"/>
        <dbReference type="ChEBI" id="CHEBI:15378"/>
        <dbReference type="ChEBI" id="CHEBI:30616"/>
        <dbReference type="ChEBI" id="CHEBI:33019"/>
        <dbReference type="ChEBI" id="CHEBI:58315"/>
        <dbReference type="ChEBI" id="CHEBI:78442"/>
        <dbReference type="ChEBI" id="CHEBI:78536"/>
        <dbReference type="ChEBI" id="CHEBI:456215"/>
        <dbReference type="EC" id="6.1.1.1"/>
    </reaction>
</comment>
<comment type="subunit">
    <text evidence="1">Homodimer.</text>
</comment>
<comment type="subcellular location">
    <subcellularLocation>
        <location evidence="1">Cytoplasm</location>
    </subcellularLocation>
</comment>
<comment type="similarity">
    <text evidence="1">Belongs to the class-I aminoacyl-tRNA synthetase family. TyrS type 1 subfamily.</text>
</comment>
<gene>
    <name evidence="1" type="primary">tyrS</name>
    <name type="ordered locus">MGAS2096_Spy0084</name>
</gene>